<protein>
    <recommendedName>
        <fullName>Aerobic glycerol-3-phosphate dehydrogenase</fullName>
        <ecNumber>1.1.5.3</ecNumber>
    </recommendedName>
</protein>
<proteinExistence type="inferred from homology"/>
<evidence type="ECO:0000250" key="1"/>
<evidence type="ECO:0000255" key="2"/>
<evidence type="ECO:0000305" key="3"/>
<gene>
    <name type="primary">glpD</name>
    <name type="ordered locus">SE_0979</name>
</gene>
<reference key="1">
    <citation type="journal article" date="2003" name="Mol. Microbiol.">
        <title>Genome-based analysis of virulence genes in a non-biofilm-forming Staphylococcus epidermidis strain (ATCC 12228).</title>
        <authorList>
            <person name="Zhang Y.-Q."/>
            <person name="Ren S.-X."/>
            <person name="Li H.-L."/>
            <person name="Wang Y.-X."/>
            <person name="Fu G."/>
            <person name="Yang J."/>
            <person name="Qin Z.-Q."/>
            <person name="Miao Y.-G."/>
            <person name="Wang W.-Y."/>
            <person name="Chen R.-S."/>
            <person name="Shen Y."/>
            <person name="Chen Z."/>
            <person name="Yuan Z.-H."/>
            <person name="Zhao G.-P."/>
            <person name="Qu D."/>
            <person name="Danchin A."/>
            <person name="Wen Y.-M."/>
        </authorList>
    </citation>
    <scope>NUCLEOTIDE SEQUENCE [LARGE SCALE GENOMIC DNA]</scope>
    <source>
        <strain>ATCC 12228 / FDA PCI 1200</strain>
    </source>
</reference>
<feature type="chain" id="PRO_0000270066" description="Aerobic glycerol-3-phosphate dehydrogenase">
    <location>
        <begin position="1"/>
        <end position="557"/>
    </location>
</feature>
<feature type="binding site" evidence="2">
    <location>
        <begin position="21"/>
        <end position="49"/>
    </location>
    <ligand>
        <name>FAD</name>
        <dbReference type="ChEBI" id="CHEBI:57692"/>
    </ligand>
</feature>
<accession>Q8CPE6</accession>
<keyword id="KW-0963">Cytoplasm</keyword>
<keyword id="KW-0274">FAD</keyword>
<keyword id="KW-0285">Flavoprotein</keyword>
<keyword id="KW-0319">Glycerol metabolism</keyword>
<keyword id="KW-0560">Oxidoreductase</keyword>
<organism>
    <name type="scientific">Staphylococcus epidermidis (strain ATCC 12228 / FDA PCI 1200)</name>
    <dbReference type="NCBI Taxonomy" id="176280"/>
    <lineage>
        <taxon>Bacteria</taxon>
        <taxon>Bacillati</taxon>
        <taxon>Bacillota</taxon>
        <taxon>Bacilli</taxon>
        <taxon>Bacillales</taxon>
        <taxon>Staphylococcaceae</taxon>
        <taxon>Staphylococcus</taxon>
    </lineage>
</organism>
<comment type="catalytic activity">
    <reaction>
        <text>a quinone + sn-glycerol 3-phosphate = dihydroxyacetone phosphate + a quinol</text>
        <dbReference type="Rhea" id="RHEA:18977"/>
        <dbReference type="ChEBI" id="CHEBI:24646"/>
        <dbReference type="ChEBI" id="CHEBI:57597"/>
        <dbReference type="ChEBI" id="CHEBI:57642"/>
        <dbReference type="ChEBI" id="CHEBI:132124"/>
        <dbReference type="EC" id="1.1.5.3"/>
    </reaction>
</comment>
<comment type="cofactor">
    <cofactor evidence="1">
        <name>FAD</name>
        <dbReference type="ChEBI" id="CHEBI:57692"/>
    </cofactor>
</comment>
<comment type="pathway">
    <text>Polyol metabolism; glycerol degradation via glycerol kinase pathway; glycerone phosphate from sn-glycerol 3-phosphate (aerobic route): step 1/1.</text>
</comment>
<comment type="subcellular location">
    <subcellularLocation>
        <location evidence="1">Cytoplasm</location>
    </subcellularLocation>
</comment>
<comment type="similarity">
    <text evidence="3">Belongs to the FAD-dependent glycerol-3-phosphate dehydrogenase family.</text>
</comment>
<sequence>MSLSTLKRDHIKKNLRDTEYDVVIVGGGITGAGIALDASNRGMKVALVEMQDFAQGTSSRSTKLVHGGLRYLKQLQVGVVAETGKERAIVYENGPHVTTPEWMLLPMHKGGTFGKFSTSIGLAMYDRLAGVKKSERKKMLSKQETLNKEPLVKRDGLKGGGYYVEYRTDDARLTIEVMKKAAENGAEILNYTKSEHFTYDSNKKVNGIEVLDMIDGETYAIKAKKVINASGPWVDEVRSGDYARNNKQLRLTKGVHVVIDQSKFPLGQAVYFDTEKDGRMIFAIPREGKAYVGTTDTFYDNEKATPLTTQEDRDYLINAINYMFPTVNVKDEDIESTWAGIRPLILEKGKDPSEISRKDEVWEGESGLLTIAGGKLTGYRHMALEIVDLLAKRLKQEYGLKFESCATKNLKISGGDVGGSKNFEHFVEQKVDAAKGFGIDEDVARRLASKYGSNVDQLFNIAQTAPYHDSKLPLEIYVELVYSIQQEMVYKPTDFLVRRSGKLYFNIQDVLDYKNAVIDVMADMLNYSETQKEAYTEEVEVAIDEARTGNDQPATKA</sequence>
<name>GLPD_STAES</name>
<dbReference type="EC" id="1.1.5.3"/>
<dbReference type="EMBL" id="AE015929">
    <property type="protein sequence ID" value="AAO04576.1"/>
    <property type="molecule type" value="Genomic_DNA"/>
</dbReference>
<dbReference type="RefSeq" id="NP_764534.1">
    <property type="nucleotide sequence ID" value="NC_004461.1"/>
</dbReference>
<dbReference type="RefSeq" id="WP_002439581.1">
    <property type="nucleotide sequence ID" value="NZ_WBME01000001.1"/>
</dbReference>
<dbReference type="SMR" id="Q8CPE6"/>
<dbReference type="KEGG" id="sep:SE_0979"/>
<dbReference type="PATRIC" id="fig|176280.10.peg.953"/>
<dbReference type="eggNOG" id="COG0578">
    <property type="taxonomic scope" value="Bacteria"/>
</dbReference>
<dbReference type="HOGENOM" id="CLU_015740_5_2_9"/>
<dbReference type="OrthoDB" id="9766796at2"/>
<dbReference type="UniPathway" id="UPA00618">
    <property type="reaction ID" value="UER00674"/>
</dbReference>
<dbReference type="Proteomes" id="UP000001411">
    <property type="component" value="Chromosome"/>
</dbReference>
<dbReference type="GO" id="GO:0005737">
    <property type="term" value="C:cytoplasm"/>
    <property type="evidence" value="ECO:0007669"/>
    <property type="project" value="UniProtKB-SubCell"/>
</dbReference>
<dbReference type="GO" id="GO:0004368">
    <property type="term" value="F:glycerol-3-phosphate dehydrogenase (quinone) activity"/>
    <property type="evidence" value="ECO:0007669"/>
    <property type="project" value="UniProtKB-EC"/>
</dbReference>
<dbReference type="GO" id="GO:0019563">
    <property type="term" value="P:glycerol catabolic process"/>
    <property type="evidence" value="ECO:0007669"/>
    <property type="project" value="UniProtKB-UniPathway"/>
</dbReference>
<dbReference type="GO" id="GO:0046168">
    <property type="term" value="P:glycerol-3-phosphate catabolic process"/>
    <property type="evidence" value="ECO:0007669"/>
    <property type="project" value="TreeGrafter"/>
</dbReference>
<dbReference type="Gene3D" id="1.10.8.870">
    <property type="entry name" value="Alpha-glycerophosphate oxidase, cap domain"/>
    <property type="match status" value="1"/>
</dbReference>
<dbReference type="Gene3D" id="3.30.9.10">
    <property type="entry name" value="D-Amino Acid Oxidase, subunit A, domain 2"/>
    <property type="match status" value="1"/>
</dbReference>
<dbReference type="Gene3D" id="3.50.50.60">
    <property type="entry name" value="FAD/NAD(P)-binding domain"/>
    <property type="match status" value="1"/>
</dbReference>
<dbReference type="InterPro" id="IPR031656">
    <property type="entry name" value="DAO_C"/>
</dbReference>
<dbReference type="InterPro" id="IPR038299">
    <property type="entry name" value="DAO_C_sf"/>
</dbReference>
<dbReference type="InterPro" id="IPR006076">
    <property type="entry name" value="FAD-dep_OxRdtase"/>
</dbReference>
<dbReference type="InterPro" id="IPR036188">
    <property type="entry name" value="FAD/NAD-bd_sf"/>
</dbReference>
<dbReference type="InterPro" id="IPR000447">
    <property type="entry name" value="G3P_DH_FAD-dep"/>
</dbReference>
<dbReference type="PANTHER" id="PTHR11985:SF35">
    <property type="entry name" value="ANAEROBIC GLYCEROL-3-PHOSPHATE DEHYDROGENASE SUBUNIT A"/>
    <property type="match status" value="1"/>
</dbReference>
<dbReference type="PANTHER" id="PTHR11985">
    <property type="entry name" value="GLYCEROL-3-PHOSPHATE DEHYDROGENASE"/>
    <property type="match status" value="1"/>
</dbReference>
<dbReference type="Pfam" id="PF01266">
    <property type="entry name" value="DAO"/>
    <property type="match status" value="1"/>
</dbReference>
<dbReference type="Pfam" id="PF16901">
    <property type="entry name" value="DAO_C"/>
    <property type="match status" value="1"/>
</dbReference>
<dbReference type="PRINTS" id="PR01001">
    <property type="entry name" value="FADG3PDH"/>
</dbReference>
<dbReference type="SUPFAM" id="SSF54373">
    <property type="entry name" value="FAD-linked reductases, C-terminal domain"/>
    <property type="match status" value="1"/>
</dbReference>
<dbReference type="SUPFAM" id="SSF51905">
    <property type="entry name" value="FAD/NAD(P)-binding domain"/>
    <property type="match status" value="1"/>
</dbReference>
<dbReference type="PROSITE" id="PS00977">
    <property type="entry name" value="FAD_G3PDH_1"/>
    <property type="match status" value="1"/>
</dbReference>
<dbReference type="PROSITE" id="PS00978">
    <property type="entry name" value="FAD_G3PDH_2"/>
    <property type="match status" value="1"/>
</dbReference>